<dbReference type="EMBL" id="AE014075">
    <property type="protein sequence ID" value="AAN83303.1"/>
    <property type="molecule type" value="Genomic_DNA"/>
</dbReference>
<dbReference type="RefSeq" id="WP_000323555.1">
    <property type="nucleotide sequence ID" value="NZ_CP051263.1"/>
</dbReference>
<dbReference type="SMR" id="P67089"/>
<dbReference type="STRING" id="199310.c4875"/>
<dbReference type="GeneID" id="75169363"/>
<dbReference type="KEGG" id="ecc:c4875"/>
<dbReference type="eggNOG" id="COG0589">
    <property type="taxonomic scope" value="Bacteria"/>
</dbReference>
<dbReference type="HOGENOM" id="CLU_049301_18_0_6"/>
<dbReference type="BioCyc" id="ECOL199310:C4875-MONOMER"/>
<dbReference type="Proteomes" id="UP000001410">
    <property type="component" value="Chromosome"/>
</dbReference>
<dbReference type="GO" id="GO:0005737">
    <property type="term" value="C:cytoplasm"/>
    <property type="evidence" value="ECO:0007669"/>
    <property type="project" value="UniProtKB-SubCell"/>
</dbReference>
<dbReference type="CDD" id="cd23657">
    <property type="entry name" value="USP-A-like"/>
    <property type="match status" value="1"/>
</dbReference>
<dbReference type="FunFam" id="3.40.50.620:FF:000065">
    <property type="entry name" value="Universal stress protein"/>
    <property type="match status" value="1"/>
</dbReference>
<dbReference type="Gene3D" id="3.40.50.620">
    <property type="entry name" value="HUPs"/>
    <property type="match status" value="1"/>
</dbReference>
<dbReference type="InterPro" id="IPR014729">
    <property type="entry name" value="Rossmann-like_a/b/a_fold"/>
</dbReference>
<dbReference type="InterPro" id="IPR006015">
    <property type="entry name" value="Universal_stress_UspA"/>
</dbReference>
<dbReference type="InterPro" id="IPR006016">
    <property type="entry name" value="UspA"/>
</dbReference>
<dbReference type="NCBIfam" id="NF007436">
    <property type="entry name" value="PRK09982.1"/>
    <property type="match status" value="1"/>
</dbReference>
<dbReference type="Pfam" id="PF00582">
    <property type="entry name" value="Usp"/>
    <property type="match status" value="1"/>
</dbReference>
<dbReference type="PIRSF" id="PIRSF006276">
    <property type="entry name" value="UspA"/>
    <property type="match status" value="1"/>
</dbReference>
<dbReference type="SUPFAM" id="SSF52402">
    <property type="entry name" value="Adenine nucleotide alpha hydrolases-like"/>
    <property type="match status" value="1"/>
</dbReference>
<evidence type="ECO:0000250" key="1"/>
<evidence type="ECO:0000305" key="2"/>
<protein>
    <recommendedName>
        <fullName>Universal stress protein D</fullName>
    </recommendedName>
</protein>
<accession>P67089</accession>
<accession>Q8FBC5</accession>
<accession>Q8X4Q5</accession>
<gene>
    <name type="primary">uspD</name>
    <name type="ordered locus">c4875</name>
</gene>
<feature type="chain" id="PRO_0000147414" description="Universal stress protein D">
    <location>
        <begin position="1"/>
        <end position="142"/>
    </location>
</feature>
<proteinExistence type="inferred from homology"/>
<keyword id="KW-0963">Cytoplasm</keyword>
<keyword id="KW-1185">Reference proteome</keyword>
<sequence>MAYKHIGVAISGNEEDALLVNKALELARHNDAHLTLIHIDDGLSELYPGIYFPATEDILQLLKNKSDNKLYKLTKNIQWPKTKLRIERGEMPETLLEIMQKEQCDLLVCGHHHSFINRLMPAYRGMINKLSADLLIVPFIDK</sequence>
<reference key="1">
    <citation type="journal article" date="2002" name="Proc. Natl. Acad. Sci. U.S.A.">
        <title>Extensive mosaic structure revealed by the complete genome sequence of uropathogenic Escherichia coli.</title>
        <authorList>
            <person name="Welch R.A."/>
            <person name="Burland V."/>
            <person name="Plunkett G. III"/>
            <person name="Redford P."/>
            <person name="Roesch P."/>
            <person name="Rasko D."/>
            <person name="Buckles E.L."/>
            <person name="Liou S.-R."/>
            <person name="Boutin A."/>
            <person name="Hackett J."/>
            <person name="Stroud D."/>
            <person name="Mayhew G.F."/>
            <person name="Rose D.J."/>
            <person name="Zhou S."/>
            <person name="Schwartz D.C."/>
            <person name="Perna N.T."/>
            <person name="Mobley H.L.T."/>
            <person name="Donnenberg M.S."/>
            <person name="Blattner F.R."/>
        </authorList>
    </citation>
    <scope>NUCLEOTIDE SEQUENCE [LARGE SCALE GENOMIC DNA]</scope>
    <source>
        <strain>CFT073 / ATCC 700928 / UPEC</strain>
    </source>
</reference>
<name>USPD_ECOL6</name>
<organism>
    <name type="scientific">Escherichia coli O6:H1 (strain CFT073 / ATCC 700928 / UPEC)</name>
    <dbReference type="NCBI Taxonomy" id="199310"/>
    <lineage>
        <taxon>Bacteria</taxon>
        <taxon>Pseudomonadati</taxon>
        <taxon>Pseudomonadota</taxon>
        <taxon>Gammaproteobacteria</taxon>
        <taxon>Enterobacterales</taxon>
        <taxon>Enterobacteriaceae</taxon>
        <taxon>Escherichia</taxon>
    </lineage>
</organism>
<comment type="function">
    <text evidence="1">Required for resistance to DNA-damaging agents.</text>
</comment>
<comment type="subcellular location">
    <subcellularLocation>
        <location evidence="1">Cytoplasm</location>
    </subcellularLocation>
</comment>
<comment type="similarity">
    <text evidence="2">Belongs to the universal stress protein A family.</text>
</comment>